<sequence>MAALRRLVSGCGRQLQAFLAGPAATGWLWLPARGLREVVKIQEGKTTVIEGRITETPKATPDPPNPSGQCPICRWNLKHKYTYEDVLLLSQFIRPYGGMLPRRVTGLCREEHRKIEECVKMAHRAGLLPNHRPQLPEGCLPKDKPKLNRYLTRWAPKSVKPIYKKGHRWNKVGMAVGSPLLKDNVCYSRRPLKMMH</sequence>
<accession>Q99N85</accession>
<accession>Q8R3H2</accession>
<accession>Q9D1J6</accession>
<comment type="subunit">
    <text evidence="1">Component of the mitochondrial ribosome small subunit (28S) which comprises a 12S rRNA and about 30 distinct proteins.</text>
</comment>
<comment type="subcellular location">
    <subcellularLocation>
        <location evidence="1">Mitochondrion</location>
    </subcellularLocation>
</comment>
<comment type="similarity">
    <text evidence="3">Belongs to the bacterial ribosomal protein bS18 family. Mitochondrion-specific ribosomal protein mL66 subfamily.</text>
</comment>
<comment type="sequence caution" evidence="3">
    <conflict type="erroneous initiation">
        <sequence resource="EMBL-CDS" id="AAH25456"/>
    </conflict>
</comment>
<feature type="transit peptide" description="Mitochondrion" evidence="2">
    <location>
        <begin position="1"/>
        <end position="34"/>
    </location>
</feature>
<feature type="chain" id="PRO_0000030626" description="Large ribosomal subunit protein mL66">
    <location>
        <begin position="35"/>
        <end position="196"/>
    </location>
</feature>
<feature type="sequence conflict" description="In Ref. 2; BAB22794." evidence="3" ref="2">
    <original>R</original>
    <variation>A</variation>
    <location>
        <position position="6"/>
    </location>
</feature>
<organism>
    <name type="scientific">Mus musculus</name>
    <name type="common">Mouse</name>
    <dbReference type="NCBI Taxonomy" id="10090"/>
    <lineage>
        <taxon>Eukaryota</taxon>
        <taxon>Metazoa</taxon>
        <taxon>Chordata</taxon>
        <taxon>Craniata</taxon>
        <taxon>Vertebrata</taxon>
        <taxon>Euteleostomi</taxon>
        <taxon>Mammalia</taxon>
        <taxon>Eutheria</taxon>
        <taxon>Euarchontoglires</taxon>
        <taxon>Glires</taxon>
        <taxon>Rodentia</taxon>
        <taxon>Myomorpha</taxon>
        <taxon>Muroidea</taxon>
        <taxon>Muridae</taxon>
        <taxon>Murinae</taxon>
        <taxon>Mus</taxon>
        <taxon>Mus</taxon>
    </lineage>
</organism>
<reference key="1">
    <citation type="journal article" date="2001" name="J. Biol. Chem.">
        <title>Proteomic analysis of the mammalian mitochondrial ribosome. Identification of protein components in the 28S small subunit.</title>
        <authorList>
            <person name="Suzuki T."/>
            <person name="Terasaki M."/>
            <person name="Takemoto-Hori C."/>
            <person name="Hanada T."/>
            <person name="Ueda T."/>
            <person name="Wada A."/>
            <person name="Watanabe K."/>
        </authorList>
    </citation>
    <scope>NUCLEOTIDE SEQUENCE [MRNA]</scope>
</reference>
<reference key="2">
    <citation type="journal article" date="2005" name="Science">
        <title>The transcriptional landscape of the mammalian genome.</title>
        <authorList>
            <person name="Carninci P."/>
            <person name="Kasukawa T."/>
            <person name="Katayama S."/>
            <person name="Gough J."/>
            <person name="Frith M.C."/>
            <person name="Maeda N."/>
            <person name="Oyama R."/>
            <person name="Ravasi T."/>
            <person name="Lenhard B."/>
            <person name="Wells C."/>
            <person name="Kodzius R."/>
            <person name="Shimokawa K."/>
            <person name="Bajic V.B."/>
            <person name="Brenner S.E."/>
            <person name="Batalov S."/>
            <person name="Forrest A.R."/>
            <person name="Zavolan M."/>
            <person name="Davis M.J."/>
            <person name="Wilming L.G."/>
            <person name="Aidinis V."/>
            <person name="Allen J.E."/>
            <person name="Ambesi-Impiombato A."/>
            <person name="Apweiler R."/>
            <person name="Aturaliya R.N."/>
            <person name="Bailey T.L."/>
            <person name="Bansal M."/>
            <person name="Baxter L."/>
            <person name="Beisel K.W."/>
            <person name="Bersano T."/>
            <person name="Bono H."/>
            <person name="Chalk A.M."/>
            <person name="Chiu K.P."/>
            <person name="Choudhary V."/>
            <person name="Christoffels A."/>
            <person name="Clutterbuck D.R."/>
            <person name="Crowe M.L."/>
            <person name="Dalla E."/>
            <person name="Dalrymple B.P."/>
            <person name="de Bono B."/>
            <person name="Della Gatta G."/>
            <person name="di Bernardo D."/>
            <person name="Down T."/>
            <person name="Engstrom P."/>
            <person name="Fagiolini M."/>
            <person name="Faulkner G."/>
            <person name="Fletcher C.F."/>
            <person name="Fukushima T."/>
            <person name="Furuno M."/>
            <person name="Futaki S."/>
            <person name="Gariboldi M."/>
            <person name="Georgii-Hemming P."/>
            <person name="Gingeras T.R."/>
            <person name="Gojobori T."/>
            <person name="Green R.E."/>
            <person name="Gustincich S."/>
            <person name="Harbers M."/>
            <person name="Hayashi Y."/>
            <person name="Hensch T.K."/>
            <person name="Hirokawa N."/>
            <person name="Hill D."/>
            <person name="Huminiecki L."/>
            <person name="Iacono M."/>
            <person name="Ikeo K."/>
            <person name="Iwama A."/>
            <person name="Ishikawa T."/>
            <person name="Jakt M."/>
            <person name="Kanapin A."/>
            <person name="Katoh M."/>
            <person name="Kawasawa Y."/>
            <person name="Kelso J."/>
            <person name="Kitamura H."/>
            <person name="Kitano H."/>
            <person name="Kollias G."/>
            <person name="Krishnan S.P."/>
            <person name="Kruger A."/>
            <person name="Kummerfeld S.K."/>
            <person name="Kurochkin I.V."/>
            <person name="Lareau L.F."/>
            <person name="Lazarevic D."/>
            <person name="Lipovich L."/>
            <person name="Liu J."/>
            <person name="Liuni S."/>
            <person name="McWilliam S."/>
            <person name="Madan Babu M."/>
            <person name="Madera M."/>
            <person name="Marchionni L."/>
            <person name="Matsuda H."/>
            <person name="Matsuzawa S."/>
            <person name="Miki H."/>
            <person name="Mignone F."/>
            <person name="Miyake S."/>
            <person name="Morris K."/>
            <person name="Mottagui-Tabar S."/>
            <person name="Mulder N."/>
            <person name="Nakano N."/>
            <person name="Nakauchi H."/>
            <person name="Ng P."/>
            <person name="Nilsson R."/>
            <person name="Nishiguchi S."/>
            <person name="Nishikawa S."/>
            <person name="Nori F."/>
            <person name="Ohara O."/>
            <person name="Okazaki Y."/>
            <person name="Orlando V."/>
            <person name="Pang K.C."/>
            <person name="Pavan W.J."/>
            <person name="Pavesi G."/>
            <person name="Pesole G."/>
            <person name="Petrovsky N."/>
            <person name="Piazza S."/>
            <person name="Reed J."/>
            <person name="Reid J.F."/>
            <person name="Ring B.Z."/>
            <person name="Ringwald M."/>
            <person name="Rost B."/>
            <person name="Ruan Y."/>
            <person name="Salzberg S.L."/>
            <person name="Sandelin A."/>
            <person name="Schneider C."/>
            <person name="Schoenbach C."/>
            <person name="Sekiguchi K."/>
            <person name="Semple C.A."/>
            <person name="Seno S."/>
            <person name="Sessa L."/>
            <person name="Sheng Y."/>
            <person name="Shibata Y."/>
            <person name="Shimada H."/>
            <person name="Shimada K."/>
            <person name="Silva D."/>
            <person name="Sinclair B."/>
            <person name="Sperling S."/>
            <person name="Stupka E."/>
            <person name="Sugiura K."/>
            <person name="Sultana R."/>
            <person name="Takenaka Y."/>
            <person name="Taki K."/>
            <person name="Tammoja K."/>
            <person name="Tan S.L."/>
            <person name="Tang S."/>
            <person name="Taylor M.S."/>
            <person name="Tegner J."/>
            <person name="Teichmann S.A."/>
            <person name="Ueda H.R."/>
            <person name="van Nimwegen E."/>
            <person name="Verardo R."/>
            <person name="Wei C.L."/>
            <person name="Yagi K."/>
            <person name="Yamanishi H."/>
            <person name="Zabarovsky E."/>
            <person name="Zhu S."/>
            <person name="Zimmer A."/>
            <person name="Hide W."/>
            <person name="Bult C."/>
            <person name="Grimmond S.M."/>
            <person name="Teasdale R.D."/>
            <person name="Liu E.T."/>
            <person name="Brusic V."/>
            <person name="Quackenbush J."/>
            <person name="Wahlestedt C."/>
            <person name="Mattick J.S."/>
            <person name="Hume D.A."/>
            <person name="Kai C."/>
            <person name="Sasaki D."/>
            <person name="Tomaru Y."/>
            <person name="Fukuda S."/>
            <person name="Kanamori-Katayama M."/>
            <person name="Suzuki M."/>
            <person name="Aoki J."/>
            <person name="Arakawa T."/>
            <person name="Iida J."/>
            <person name="Imamura K."/>
            <person name="Itoh M."/>
            <person name="Kato T."/>
            <person name="Kawaji H."/>
            <person name="Kawagashira N."/>
            <person name="Kawashima T."/>
            <person name="Kojima M."/>
            <person name="Kondo S."/>
            <person name="Konno H."/>
            <person name="Nakano K."/>
            <person name="Ninomiya N."/>
            <person name="Nishio T."/>
            <person name="Okada M."/>
            <person name="Plessy C."/>
            <person name="Shibata K."/>
            <person name="Shiraki T."/>
            <person name="Suzuki S."/>
            <person name="Tagami M."/>
            <person name="Waki K."/>
            <person name="Watahiki A."/>
            <person name="Okamura-Oho Y."/>
            <person name="Suzuki H."/>
            <person name="Kawai J."/>
            <person name="Hayashizaki Y."/>
        </authorList>
    </citation>
    <scope>NUCLEOTIDE SEQUENCE [LARGE SCALE MRNA]</scope>
    <source>
        <strain>C57BL/6J</strain>
        <tissue>Embryo</tissue>
    </source>
</reference>
<reference key="3">
    <citation type="journal article" date="2004" name="Genome Res.">
        <title>The status, quality, and expansion of the NIH full-length cDNA project: the Mammalian Gene Collection (MGC).</title>
        <authorList>
            <consortium name="The MGC Project Team"/>
        </authorList>
    </citation>
    <scope>NUCLEOTIDE SEQUENCE [LARGE SCALE MRNA] OF 68-196</scope>
</reference>
<dbReference type="EMBL" id="AB049953">
    <property type="protein sequence ID" value="BAB41006.1"/>
    <property type="molecule type" value="mRNA"/>
</dbReference>
<dbReference type="EMBL" id="AK003444">
    <property type="protein sequence ID" value="BAB22794.1"/>
    <property type="molecule type" value="mRNA"/>
</dbReference>
<dbReference type="EMBL" id="BC025456">
    <property type="protein sequence ID" value="AAH25456.1"/>
    <property type="status" value="ALT_INIT"/>
    <property type="molecule type" value="mRNA"/>
</dbReference>
<dbReference type="CCDS" id="CCDS28819.1"/>
<dbReference type="RefSeq" id="NP_081044.1">
    <property type="nucleotide sequence ID" value="NM_026768.3"/>
</dbReference>
<dbReference type="SMR" id="Q99N85"/>
<dbReference type="BioGRID" id="212930">
    <property type="interactions" value="22"/>
</dbReference>
<dbReference type="ComplexPortal" id="CPX-5302">
    <property type="entry name" value="39S mitochondrial large ribosomal subunit"/>
</dbReference>
<dbReference type="FunCoup" id="Q99N85">
    <property type="interactions" value="722"/>
</dbReference>
<dbReference type="STRING" id="10090.ENSMUSP00000024763"/>
<dbReference type="iPTMnet" id="Q99N85"/>
<dbReference type="PhosphoSitePlus" id="Q99N85"/>
<dbReference type="SwissPalm" id="Q99N85"/>
<dbReference type="PaxDb" id="10090-ENSMUSP00000024763"/>
<dbReference type="ProteomicsDB" id="256635"/>
<dbReference type="Pumba" id="Q99N85"/>
<dbReference type="DNASU" id="68565"/>
<dbReference type="GeneID" id="68565"/>
<dbReference type="KEGG" id="mmu:68565"/>
<dbReference type="AGR" id="MGI:1915815"/>
<dbReference type="CTD" id="55168"/>
<dbReference type="MGI" id="MGI:1915815">
    <property type="gene designation" value="Mrps18a"/>
</dbReference>
<dbReference type="eggNOG" id="KOG3162">
    <property type="taxonomic scope" value="Eukaryota"/>
</dbReference>
<dbReference type="InParanoid" id="Q99N85"/>
<dbReference type="OrthoDB" id="10054543at2759"/>
<dbReference type="PhylomeDB" id="Q99N85"/>
<dbReference type="Reactome" id="R-MMU-5389840">
    <property type="pathway name" value="Mitochondrial translation elongation"/>
</dbReference>
<dbReference type="Reactome" id="R-MMU-5419276">
    <property type="pathway name" value="Mitochondrial translation termination"/>
</dbReference>
<dbReference type="BioGRID-ORCS" id="68565">
    <property type="hits" value="25 hits in 78 CRISPR screens"/>
</dbReference>
<dbReference type="ChiTaRS" id="Mrps18a">
    <property type="organism name" value="mouse"/>
</dbReference>
<dbReference type="PRO" id="PR:Q99N85"/>
<dbReference type="Proteomes" id="UP000000589">
    <property type="component" value="Unplaced"/>
</dbReference>
<dbReference type="RNAct" id="Q99N85">
    <property type="molecule type" value="protein"/>
</dbReference>
<dbReference type="GO" id="GO:0005743">
    <property type="term" value="C:mitochondrial inner membrane"/>
    <property type="evidence" value="ECO:0000303"/>
    <property type="project" value="ComplexPortal"/>
</dbReference>
<dbReference type="GO" id="GO:0005762">
    <property type="term" value="C:mitochondrial large ribosomal subunit"/>
    <property type="evidence" value="ECO:0000303"/>
    <property type="project" value="ComplexPortal"/>
</dbReference>
<dbReference type="GO" id="GO:0005763">
    <property type="term" value="C:mitochondrial small ribosomal subunit"/>
    <property type="evidence" value="ECO:0000250"/>
    <property type="project" value="UniProtKB"/>
</dbReference>
<dbReference type="GO" id="GO:0005739">
    <property type="term" value="C:mitochondrion"/>
    <property type="evidence" value="ECO:0007005"/>
    <property type="project" value="MGI"/>
</dbReference>
<dbReference type="GO" id="GO:0003735">
    <property type="term" value="F:structural constituent of ribosome"/>
    <property type="evidence" value="ECO:0000250"/>
    <property type="project" value="UniProtKB"/>
</dbReference>
<dbReference type="GO" id="GO:0032543">
    <property type="term" value="P:mitochondrial translation"/>
    <property type="evidence" value="ECO:0000250"/>
    <property type="project" value="UniProtKB"/>
</dbReference>
<dbReference type="FunFam" id="4.10.640.10:FF:000011">
    <property type="entry name" value="28S ribosomal protein S18a, mitochondrial"/>
    <property type="match status" value="1"/>
</dbReference>
<dbReference type="Gene3D" id="4.10.640.10">
    <property type="entry name" value="Ribosomal protein S18"/>
    <property type="match status" value="1"/>
</dbReference>
<dbReference type="InterPro" id="IPR001648">
    <property type="entry name" value="Ribosomal_bS18"/>
</dbReference>
<dbReference type="InterPro" id="IPR036870">
    <property type="entry name" value="Ribosomal_bS18_sf"/>
</dbReference>
<dbReference type="PANTHER" id="PTHR13479">
    <property type="entry name" value="30S RIBOSOMAL PROTEIN S18"/>
    <property type="match status" value="1"/>
</dbReference>
<dbReference type="PANTHER" id="PTHR13479:SF66">
    <property type="entry name" value="LARGE RIBOSOMAL SUBUNIT PROTEIN ML66"/>
    <property type="match status" value="1"/>
</dbReference>
<dbReference type="Pfam" id="PF01084">
    <property type="entry name" value="Ribosomal_S18"/>
    <property type="match status" value="1"/>
</dbReference>
<dbReference type="SUPFAM" id="SSF46911">
    <property type="entry name" value="Ribosomal protein S18"/>
    <property type="match status" value="1"/>
</dbReference>
<protein>
    <recommendedName>
        <fullName evidence="3">Large ribosomal subunit protein mL66</fullName>
    </recommendedName>
    <alternativeName>
        <fullName>28S ribosomal protein S18-3, mitochondrial</fullName>
        <shortName>MRP-S18-3</shortName>
    </alternativeName>
    <alternativeName>
        <fullName>28S ribosomal protein S18a, mitochondrial</fullName>
        <shortName>MRP-S18-a</shortName>
        <shortName>Mrps18a</shortName>
        <shortName>S18mt-a</shortName>
    </alternativeName>
</protein>
<evidence type="ECO:0000250" key="1">
    <source>
        <dbReference type="UniProtKB" id="P82919"/>
    </source>
</evidence>
<evidence type="ECO:0000255" key="2"/>
<evidence type="ECO:0000305" key="3"/>
<name>RT18A_MOUSE</name>
<gene>
    <name type="primary">Mrps18a</name>
</gene>
<keyword id="KW-0496">Mitochondrion</keyword>
<keyword id="KW-1185">Reference proteome</keyword>
<keyword id="KW-0687">Ribonucleoprotein</keyword>
<keyword id="KW-0689">Ribosomal protein</keyword>
<keyword id="KW-0809">Transit peptide</keyword>
<proteinExistence type="evidence at transcript level"/>